<feature type="chain" id="PRO_0000137554" description="Inorganic pyrophosphatase">
    <location>
        <begin position="1"/>
        <end position="177"/>
    </location>
</feature>
<feature type="binding site" evidence="1">
    <location>
        <position position="34"/>
    </location>
    <ligand>
        <name>substrate</name>
    </ligand>
</feature>
<feature type="binding site" evidence="1">
    <location>
        <position position="48"/>
    </location>
    <ligand>
        <name>substrate</name>
    </ligand>
</feature>
<feature type="binding site" evidence="1">
    <location>
        <position position="60"/>
    </location>
    <ligand>
        <name>substrate</name>
    </ligand>
</feature>
<feature type="binding site" evidence="1">
    <location>
        <position position="70"/>
    </location>
    <ligand>
        <name>Mg(2+)</name>
        <dbReference type="ChEBI" id="CHEBI:18420"/>
        <label>1</label>
    </ligand>
</feature>
<feature type="binding site" evidence="1">
    <location>
        <position position="75"/>
    </location>
    <ligand>
        <name>Mg(2+)</name>
        <dbReference type="ChEBI" id="CHEBI:18420"/>
        <label>1</label>
    </ligand>
</feature>
<feature type="binding site" evidence="1">
    <location>
        <position position="75"/>
    </location>
    <ligand>
        <name>Mg(2+)</name>
        <dbReference type="ChEBI" id="CHEBI:18420"/>
        <label>2</label>
    </ligand>
</feature>
<feature type="binding site" evidence="1">
    <location>
        <position position="107"/>
    </location>
    <ligand>
        <name>Mg(2+)</name>
        <dbReference type="ChEBI" id="CHEBI:18420"/>
        <label>1</label>
    </ligand>
</feature>
<feature type="binding site" evidence="1">
    <location>
        <position position="144"/>
    </location>
    <ligand>
        <name>substrate</name>
    </ligand>
</feature>
<reference key="1">
    <citation type="journal article" date="2004" name="Proc. Natl. Acad. Sci. U.S.A.">
        <title>Genome sequence of Picrophilus torridus and its implications for life around pH 0.</title>
        <authorList>
            <person name="Fuetterer O."/>
            <person name="Angelov A."/>
            <person name="Liesegang H."/>
            <person name="Gottschalk G."/>
            <person name="Schleper C."/>
            <person name="Schepers B."/>
            <person name="Dock C."/>
            <person name="Antranikian G."/>
            <person name="Liebl W."/>
        </authorList>
    </citation>
    <scope>NUCLEOTIDE SEQUENCE [LARGE SCALE GENOMIC DNA]</scope>
    <source>
        <strain>ATCC 700027 / DSM 9790 / JCM 10055 / NBRC 100828 / KAW 2/3</strain>
    </source>
</reference>
<comment type="function">
    <text evidence="1">Catalyzes the hydrolysis of inorganic pyrophosphate (PPi) forming two phosphate ions.</text>
</comment>
<comment type="catalytic activity">
    <reaction evidence="1">
        <text>diphosphate + H2O = 2 phosphate + H(+)</text>
        <dbReference type="Rhea" id="RHEA:24576"/>
        <dbReference type="ChEBI" id="CHEBI:15377"/>
        <dbReference type="ChEBI" id="CHEBI:15378"/>
        <dbReference type="ChEBI" id="CHEBI:33019"/>
        <dbReference type="ChEBI" id="CHEBI:43474"/>
        <dbReference type="EC" id="3.6.1.1"/>
    </reaction>
</comment>
<comment type="cofactor">
    <cofactor evidence="1">
        <name>Mg(2+)</name>
        <dbReference type="ChEBI" id="CHEBI:18420"/>
    </cofactor>
</comment>
<comment type="subunit">
    <text evidence="1">Homohexamer.</text>
</comment>
<comment type="subcellular location">
    <subcellularLocation>
        <location evidence="1">Cytoplasm</location>
    </subcellularLocation>
</comment>
<comment type="similarity">
    <text evidence="1">Belongs to the PPase family.</text>
</comment>
<evidence type="ECO:0000255" key="1">
    <source>
        <dbReference type="HAMAP-Rule" id="MF_00209"/>
    </source>
</evidence>
<gene>
    <name evidence="1" type="primary">ppa</name>
    <name type="ordered locus">PTO1354</name>
</gene>
<sequence length="177" mass="20498">MEKNMSYWHQVPPGPNPPDEVYVVVEIPKGERNKYEIAKEFPGIKLDRIIYSSYVYPLEYGLIPQTYYSDGDPIDAMVFMSQSTYPGVILRAKPVGMMNMVDSGDVDNKIICVCLDDPVYSKINNYREIPEHVLKETENFFETYKKLQNKEVKVTGWEGPDKAKQEIKKAIEDYKKL</sequence>
<keyword id="KW-0963">Cytoplasm</keyword>
<keyword id="KW-0378">Hydrolase</keyword>
<keyword id="KW-0460">Magnesium</keyword>
<keyword id="KW-0479">Metal-binding</keyword>
<dbReference type="EC" id="3.6.1.1" evidence="1"/>
<dbReference type="EMBL" id="AE017261">
    <property type="protein sequence ID" value="AAT43939.1"/>
    <property type="molecule type" value="Genomic_DNA"/>
</dbReference>
<dbReference type="RefSeq" id="WP_011178155.1">
    <property type="nucleotide sequence ID" value="NC_005877.1"/>
</dbReference>
<dbReference type="SMR" id="Q6KZB3"/>
<dbReference type="FunCoup" id="Q6KZB3">
    <property type="interactions" value="82"/>
</dbReference>
<dbReference type="STRING" id="263820.PTO1354"/>
<dbReference type="PaxDb" id="263820-PTO1354"/>
<dbReference type="GeneID" id="2845201"/>
<dbReference type="KEGG" id="pto:PTO1354"/>
<dbReference type="PATRIC" id="fig|263820.9.peg.1409"/>
<dbReference type="eggNOG" id="arCOG01711">
    <property type="taxonomic scope" value="Archaea"/>
</dbReference>
<dbReference type="HOGENOM" id="CLU_073198_1_2_2"/>
<dbReference type="InParanoid" id="Q6KZB3"/>
<dbReference type="OrthoDB" id="134160at2157"/>
<dbReference type="Proteomes" id="UP000000438">
    <property type="component" value="Chromosome"/>
</dbReference>
<dbReference type="GO" id="GO:0005737">
    <property type="term" value="C:cytoplasm"/>
    <property type="evidence" value="ECO:0007669"/>
    <property type="project" value="UniProtKB-SubCell"/>
</dbReference>
<dbReference type="GO" id="GO:0004427">
    <property type="term" value="F:inorganic diphosphate phosphatase activity"/>
    <property type="evidence" value="ECO:0007669"/>
    <property type="project" value="UniProtKB-UniRule"/>
</dbReference>
<dbReference type="GO" id="GO:0000287">
    <property type="term" value="F:magnesium ion binding"/>
    <property type="evidence" value="ECO:0007669"/>
    <property type="project" value="UniProtKB-UniRule"/>
</dbReference>
<dbReference type="GO" id="GO:0006796">
    <property type="term" value="P:phosphate-containing compound metabolic process"/>
    <property type="evidence" value="ECO:0007669"/>
    <property type="project" value="InterPro"/>
</dbReference>
<dbReference type="CDD" id="cd00412">
    <property type="entry name" value="pyrophosphatase"/>
    <property type="match status" value="1"/>
</dbReference>
<dbReference type="FunFam" id="3.90.80.10:FF:000003">
    <property type="entry name" value="Inorganic pyrophosphatase"/>
    <property type="match status" value="1"/>
</dbReference>
<dbReference type="Gene3D" id="3.90.80.10">
    <property type="entry name" value="Inorganic pyrophosphatase"/>
    <property type="match status" value="1"/>
</dbReference>
<dbReference type="HAMAP" id="MF_00209">
    <property type="entry name" value="Inorganic_PPase"/>
    <property type="match status" value="1"/>
</dbReference>
<dbReference type="InterPro" id="IPR008162">
    <property type="entry name" value="Pyrophosphatase"/>
</dbReference>
<dbReference type="InterPro" id="IPR036649">
    <property type="entry name" value="Pyrophosphatase_sf"/>
</dbReference>
<dbReference type="PANTHER" id="PTHR10286">
    <property type="entry name" value="INORGANIC PYROPHOSPHATASE"/>
    <property type="match status" value="1"/>
</dbReference>
<dbReference type="Pfam" id="PF00719">
    <property type="entry name" value="Pyrophosphatase"/>
    <property type="match status" value="1"/>
</dbReference>
<dbReference type="SUPFAM" id="SSF50324">
    <property type="entry name" value="Inorganic pyrophosphatase"/>
    <property type="match status" value="1"/>
</dbReference>
<dbReference type="PROSITE" id="PS00387">
    <property type="entry name" value="PPASE"/>
    <property type="match status" value="1"/>
</dbReference>
<proteinExistence type="inferred from homology"/>
<organism>
    <name type="scientific">Picrophilus torridus (strain ATCC 700027 / DSM 9790 / JCM 10055 / NBRC 100828 / KAW 2/3)</name>
    <dbReference type="NCBI Taxonomy" id="1122961"/>
    <lineage>
        <taxon>Archaea</taxon>
        <taxon>Methanobacteriati</taxon>
        <taxon>Thermoplasmatota</taxon>
        <taxon>Thermoplasmata</taxon>
        <taxon>Thermoplasmatales</taxon>
        <taxon>Picrophilaceae</taxon>
        <taxon>Picrophilus</taxon>
    </lineage>
</organism>
<protein>
    <recommendedName>
        <fullName evidence="1">Inorganic pyrophosphatase</fullName>
        <ecNumber evidence="1">3.6.1.1</ecNumber>
    </recommendedName>
    <alternativeName>
        <fullName evidence="1">Pyrophosphate phospho-hydrolase</fullName>
        <shortName evidence="1">PPase</shortName>
    </alternativeName>
</protein>
<accession>Q6KZB3</accession>
<name>IPYR_PICTO</name>